<evidence type="ECO:0000255" key="1">
    <source>
        <dbReference type="HAMAP-Rule" id="MF_00418"/>
    </source>
</evidence>
<evidence type="ECO:0000305" key="2"/>
<reference key="1">
    <citation type="journal article" date="2008" name="Science">
        <title>Genome of an endosymbiont coupling N2 fixation to cellulolysis within RT protist cells in termite gut.</title>
        <authorList>
            <person name="Hongoh Y."/>
            <person name="Sharma V.K."/>
            <person name="Prakash T."/>
            <person name="Noda S."/>
            <person name="Toh H."/>
            <person name="Taylor T.D."/>
            <person name="Kudo T."/>
            <person name="Sakaki Y."/>
            <person name="Toyoda A."/>
            <person name="Hattori M."/>
            <person name="Ohkuma M."/>
        </authorList>
    </citation>
    <scope>NUCLEOTIDE SEQUENCE [LARGE SCALE GENOMIC DNA]</scope>
</reference>
<name>DAPA_AZOPC</name>
<organism>
    <name type="scientific">Azobacteroides pseudotrichonymphae genomovar. CFP2</name>
    <dbReference type="NCBI Taxonomy" id="511995"/>
    <lineage>
        <taxon>Bacteria</taxon>
        <taxon>Pseudomonadati</taxon>
        <taxon>Bacteroidota</taxon>
        <taxon>Bacteroidia</taxon>
        <taxon>Bacteroidales</taxon>
        <taxon>Candidatus Azobacteroides</taxon>
    </lineage>
</organism>
<protein>
    <recommendedName>
        <fullName evidence="1">4-hydroxy-tetrahydrodipicolinate synthase</fullName>
        <shortName evidence="1">HTPA synthase</shortName>
        <ecNumber evidence="1">4.3.3.7</ecNumber>
    </recommendedName>
</protein>
<feature type="chain" id="PRO_1000124017" description="4-hydroxy-tetrahydrodipicolinate synthase">
    <location>
        <begin position="1"/>
        <end position="296"/>
    </location>
</feature>
<feature type="active site" description="Proton donor/acceptor" evidence="1">
    <location>
        <position position="137"/>
    </location>
</feature>
<feature type="active site" description="Schiff-base intermediate with substrate" evidence="1">
    <location>
        <position position="166"/>
    </location>
</feature>
<feature type="binding site" evidence="1">
    <location>
        <position position="49"/>
    </location>
    <ligand>
        <name>pyruvate</name>
        <dbReference type="ChEBI" id="CHEBI:15361"/>
    </ligand>
</feature>
<feature type="binding site" evidence="1">
    <location>
        <position position="208"/>
    </location>
    <ligand>
        <name>pyruvate</name>
        <dbReference type="ChEBI" id="CHEBI:15361"/>
    </ligand>
</feature>
<feature type="site" description="Part of a proton relay during catalysis" evidence="1">
    <location>
        <position position="48"/>
    </location>
</feature>
<feature type="site" description="Part of a proton relay during catalysis" evidence="1">
    <location>
        <position position="111"/>
    </location>
</feature>
<accession>B6YQ20</accession>
<keyword id="KW-0028">Amino-acid biosynthesis</keyword>
<keyword id="KW-0963">Cytoplasm</keyword>
<keyword id="KW-0220">Diaminopimelate biosynthesis</keyword>
<keyword id="KW-0456">Lyase</keyword>
<keyword id="KW-0457">Lysine biosynthesis</keyword>
<keyword id="KW-1185">Reference proteome</keyword>
<keyword id="KW-0704">Schiff base</keyword>
<proteinExistence type="inferred from homology"/>
<gene>
    <name evidence="1" type="primary">dapA</name>
    <name type="ordered locus">CFPG_029</name>
</gene>
<comment type="function">
    <text evidence="1">Catalyzes the condensation of (S)-aspartate-beta-semialdehyde [(S)-ASA] and pyruvate to 4-hydroxy-tetrahydrodipicolinate (HTPA).</text>
</comment>
<comment type="catalytic activity">
    <reaction evidence="1">
        <text>L-aspartate 4-semialdehyde + pyruvate = (2S,4S)-4-hydroxy-2,3,4,5-tetrahydrodipicolinate + H2O + H(+)</text>
        <dbReference type="Rhea" id="RHEA:34171"/>
        <dbReference type="ChEBI" id="CHEBI:15361"/>
        <dbReference type="ChEBI" id="CHEBI:15377"/>
        <dbReference type="ChEBI" id="CHEBI:15378"/>
        <dbReference type="ChEBI" id="CHEBI:67139"/>
        <dbReference type="ChEBI" id="CHEBI:537519"/>
        <dbReference type="EC" id="4.3.3.7"/>
    </reaction>
</comment>
<comment type="pathway">
    <text evidence="1">Amino-acid biosynthesis; L-lysine biosynthesis via DAP pathway; (S)-tetrahydrodipicolinate from L-aspartate: step 3/4.</text>
</comment>
<comment type="subunit">
    <text evidence="1">Homotetramer; dimer of dimers.</text>
</comment>
<comment type="subcellular location">
    <subcellularLocation>
        <location evidence="1">Cytoplasm</location>
    </subcellularLocation>
</comment>
<comment type="similarity">
    <text evidence="1">Belongs to the DapA family.</text>
</comment>
<comment type="caution">
    <text evidence="2">Was originally thought to be a dihydrodipicolinate synthase (DHDPS), catalyzing the condensation of (S)-aspartate-beta-semialdehyde [(S)-ASA] and pyruvate to dihydrodipicolinate (DHDP). However, it was shown in E.coli that the product of the enzymatic reaction is not dihydrodipicolinate but in fact (4S)-4-hydroxy-2,3,4,5-tetrahydro-(2S)-dipicolinic acid (HTPA), and that the consecutive dehydration reaction leading to DHDP is not spontaneous but catalyzed by DapB.</text>
</comment>
<sequence length="296" mass="32488">MRQIVLRGMGVALITPFKCDGTVDYPALSYLVDYQLQNGIDYLIVLGTTAETPTLSYEEQKEIVRLVVSIVRERIPIVVGVGGNNTQAVIHKLNTEDFGKIDAILSVVPYYNKPTQDGIYQHFKYIAQATSLPIILYNVPSRTGVNMTAETSLLLANDFENIVAIKEASGNIDQIGVIIENKPSGFQVLSGDDELSLSLIGIGAVGVISVIGNVFPKEFGKMIRLALNGDSDNARIIHGQFAELFELLFIEGNPAGVKGMLNVMGFIENKLRLPLVPVLEATYERIKKALLMFRTQ</sequence>
<dbReference type="EC" id="4.3.3.7" evidence="1"/>
<dbReference type="EMBL" id="AP010656">
    <property type="protein sequence ID" value="BAG83292.1"/>
    <property type="molecule type" value="Genomic_DNA"/>
</dbReference>
<dbReference type="RefSeq" id="WP_012573053.1">
    <property type="nucleotide sequence ID" value="NC_011565.1"/>
</dbReference>
<dbReference type="SMR" id="B6YQ20"/>
<dbReference type="STRING" id="511995.CFPG_029"/>
<dbReference type="KEGG" id="aps:CFPG_029"/>
<dbReference type="eggNOG" id="COG0329">
    <property type="taxonomic scope" value="Bacteria"/>
</dbReference>
<dbReference type="HOGENOM" id="CLU_049343_7_1_10"/>
<dbReference type="OrthoDB" id="9782828at2"/>
<dbReference type="UniPathway" id="UPA00034">
    <property type="reaction ID" value="UER00017"/>
</dbReference>
<dbReference type="Proteomes" id="UP000000723">
    <property type="component" value="Chromosome"/>
</dbReference>
<dbReference type="GO" id="GO:0005829">
    <property type="term" value="C:cytosol"/>
    <property type="evidence" value="ECO:0007669"/>
    <property type="project" value="TreeGrafter"/>
</dbReference>
<dbReference type="GO" id="GO:0008840">
    <property type="term" value="F:4-hydroxy-tetrahydrodipicolinate synthase activity"/>
    <property type="evidence" value="ECO:0007669"/>
    <property type="project" value="UniProtKB-UniRule"/>
</dbReference>
<dbReference type="GO" id="GO:0019877">
    <property type="term" value="P:diaminopimelate biosynthetic process"/>
    <property type="evidence" value="ECO:0007669"/>
    <property type="project" value="UniProtKB-UniRule"/>
</dbReference>
<dbReference type="GO" id="GO:0009089">
    <property type="term" value="P:lysine biosynthetic process via diaminopimelate"/>
    <property type="evidence" value="ECO:0007669"/>
    <property type="project" value="UniProtKB-UniRule"/>
</dbReference>
<dbReference type="CDD" id="cd00950">
    <property type="entry name" value="DHDPS"/>
    <property type="match status" value="1"/>
</dbReference>
<dbReference type="Gene3D" id="3.20.20.70">
    <property type="entry name" value="Aldolase class I"/>
    <property type="match status" value="1"/>
</dbReference>
<dbReference type="HAMAP" id="MF_00418">
    <property type="entry name" value="DapA"/>
    <property type="match status" value="1"/>
</dbReference>
<dbReference type="InterPro" id="IPR013785">
    <property type="entry name" value="Aldolase_TIM"/>
</dbReference>
<dbReference type="InterPro" id="IPR005263">
    <property type="entry name" value="DapA"/>
</dbReference>
<dbReference type="InterPro" id="IPR002220">
    <property type="entry name" value="DapA-like"/>
</dbReference>
<dbReference type="InterPro" id="IPR020625">
    <property type="entry name" value="Schiff_base-form_aldolases_AS"/>
</dbReference>
<dbReference type="NCBIfam" id="TIGR00674">
    <property type="entry name" value="dapA"/>
    <property type="match status" value="1"/>
</dbReference>
<dbReference type="PANTHER" id="PTHR12128:SF66">
    <property type="entry name" value="4-HYDROXY-2-OXOGLUTARATE ALDOLASE, MITOCHONDRIAL"/>
    <property type="match status" value="1"/>
</dbReference>
<dbReference type="PANTHER" id="PTHR12128">
    <property type="entry name" value="DIHYDRODIPICOLINATE SYNTHASE"/>
    <property type="match status" value="1"/>
</dbReference>
<dbReference type="Pfam" id="PF00701">
    <property type="entry name" value="DHDPS"/>
    <property type="match status" value="1"/>
</dbReference>
<dbReference type="PIRSF" id="PIRSF001365">
    <property type="entry name" value="DHDPS"/>
    <property type="match status" value="1"/>
</dbReference>
<dbReference type="PRINTS" id="PR00146">
    <property type="entry name" value="DHPICSNTHASE"/>
</dbReference>
<dbReference type="SMART" id="SM01130">
    <property type="entry name" value="DHDPS"/>
    <property type="match status" value="1"/>
</dbReference>
<dbReference type="SUPFAM" id="SSF51569">
    <property type="entry name" value="Aldolase"/>
    <property type="match status" value="1"/>
</dbReference>
<dbReference type="PROSITE" id="PS00666">
    <property type="entry name" value="DHDPS_2"/>
    <property type="match status" value="1"/>
</dbReference>